<proteinExistence type="inferred from homology"/>
<name>RIR1_EHV4</name>
<comment type="function">
    <text evidence="1">Ribonucleoside-diphosphate reductase holoenzyme provides the precursors necessary for viral DNA synthesis. Allows virus growth in non-dividing cells, as well as reactivation from latency in infected hosts. Catalyzes the biosynthesis of deoxyribonucleotides from the corresponding ribonucleotides.</text>
</comment>
<comment type="catalytic activity">
    <reaction evidence="1">
        <text>a 2'-deoxyribonucleoside 5'-diphosphate + [thioredoxin]-disulfide + H2O = a ribonucleoside 5'-diphosphate + [thioredoxin]-dithiol</text>
        <dbReference type="Rhea" id="RHEA:23252"/>
        <dbReference type="Rhea" id="RHEA-COMP:10698"/>
        <dbReference type="Rhea" id="RHEA-COMP:10700"/>
        <dbReference type="ChEBI" id="CHEBI:15377"/>
        <dbReference type="ChEBI" id="CHEBI:29950"/>
        <dbReference type="ChEBI" id="CHEBI:50058"/>
        <dbReference type="ChEBI" id="CHEBI:57930"/>
        <dbReference type="ChEBI" id="CHEBI:73316"/>
        <dbReference type="EC" id="1.17.4.1"/>
    </reaction>
</comment>
<comment type="subunit">
    <text evidence="1">Heterotetramer composed of a homodimer of the large subunit (R1) and a homodimer of the small subunit (R2). Larger multisubunit protein complex are also active, composed of (R1)n(R2)n.</text>
</comment>
<comment type="similarity">
    <text evidence="1">Belongs to the ribonucleoside diphosphate reductase large chain family.</text>
</comment>
<dbReference type="EC" id="1.17.4.1" evidence="1"/>
<dbReference type="EMBL" id="X75354">
    <property type="protein sequence ID" value="CAA53100.1"/>
    <property type="molecule type" value="Genomic_DNA"/>
</dbReference>
<dbReference type="SMR" id="P50642"/>
<dbReference type="IntAct" id="P50642">
    <property type="interactions" value="2"/>
</dbReference>
<dbReference type="MINT" id="P50642"/>
<dbReference type="GO" id="GO:0005524">
    <property type="term" value="F:ATP binding"/>
    <property type="evidence" value="ECO:0007669"/>
    <property type="project" value="UniProtKB-UniRule"/>
</dbReference>
<dbReference type="GO" id="GO:0004748">
    <property type="term" value="F:ribonucleoside-diphosphate reductase activity, thioredoxin disulfide as acceptor"/>
    <property type="evidence" value="ECO:0007669"/>
    <property type="project" value="UniProtKB-UniRule"/>
</dbReference>
<dbReference type="GO" id="GO:0009263">
    <property type="term" value="P:deoxyribonucleotide biosynthetic process"/>
    <property type="evidence" value="ECO:0007669"/>
    <property type="project" value="InterPro"/>
</dbReference>
<dbReference type="GO" id="GO:0006260">
    <property type="term" value="P:DNA replication"/>
    <property type="evidence" value="ECO:0007669"/>
    <property type="project" value="UniProtKB-KW"/>
</dbReference>
<dbReference type="GO" id="GO:0019046">
    <property type="term" value="P:release from viral latency"/>
    <property type="evidence" value="ECO:0007669"/>
    <property type="project" value="UniProtKB-KW"/>
</dbReference>
<dbReference type="Gene3D" id="3.20.70.20">
    <property type="match status" value="1"/>
</dbReference>
<dbReference type="HAMAP" id="MF_04026">
    <property type="entry name" value="HSV_RIR1"/>
    <property type="match status" value="1"/>
</dbReference>
<dbReference type="InterPro" id="IPR034717">
    <property type="entry name" value="HSV_RIR1"/>
</dbReference>
<dbReference type="InterPro" id="IPR013346">
    <property type="entry name" value="NrdE_NrdA_C"/>
</dbReference>
<dbReference type="InterPro" id="IPR000788">
    <property type="entry name" value="RNR_lg_C"/>
</dbReference>
<dbReference type="InterPro" id="IPR013509">
    <property type="entry name" value="RNR_lsu_N"/>
</dbReference>
<dbReference type="InterPro" id="IPR039718">
    <property type="entry name" value="Rrm1"/>
</dbReference>
<dbReference type="NCBIfam" id="TIGR02506">
    <property type="entry name" value="NrdE_NrdA"/>
    <property type="match status" value="1"/>
</dbReference>
<dbReference type="PANTHER" id="PTHR11573">
    <property type="entry name" value="RIBONUCLEOSIDE-DIPHOSPHATE REDUCTASE LARGE CHAIN"/>
    <property type="match status" value="1"/>
</dbReference>
<dbReference type="PANTHER" id="PTHR11573:SF6">
    <property type="entry name" value="RIBONUCLEOSIDE-DIPHOSPHATE REDUCTASE LARGE SUBUNIT"/>
    <property type="match status" value="1"/>
</dbReference>
<dbReference type="Pfam" id="PF02867">
    <property type="entry name" value="Ribonuc_red_lgC"/>
    <property type="match status" value="1"/>
</dbReference>
<dbReference type="Pfam" id="PF00317">
    <property type="entry name" value="Ribonuc_red_lgN"/>
    <property type="match status" value="1"/>
</dbReference>
<dbReference type="PRINTS" id="PR01183">
    <property type="entry name" value="RIBORDTASEM1"/>
</dbReference>
<dbReference type="SUPFAM" id="SSF51998">
    <property type="entry name" value="PFL-like glycyl radical enzymes"/>
    <property type="match status" value="1"/>
</dbReference>
<dbReference type="PROSITE" id="PS00089">
    <property type="entry name" value="RIBORED_LARGE"/>
    <property type="match status" value="1"/>
</dbReference>
<protein>
    <recommendedName>
        <fullName evidence="1">Ribonucleoside-diphosphate reductase large subunit</fullName>
        <shortName evidence="1">R1</shortName>
        <ecNumber evidence="1">1.17.4.1</ecNumber>
    </recommendedName>
    <alternativeName>
        <fullName evidence="1">Ribonucleotide reductase large subunit</fullName>
    </alternativeName>
</protein>
<reference key="1">
    <citation type="journal article" date="1994" name="Gene">
        <title>Sequences of the ribonucleotide reductase-encoding genes of equine herpesvirus 4.</title>
        <authorList>
            <person name="Riggio M.P."/>
            <person name="Onions D.E."/>
        </authorList>
    </citation>
    <scope>NUCLEOTIDE SEQUENCE [GENOMIC DNA]</scope>
</reference>
<reference key="2">
    <citation type="journal article" date="2009" name="Trends Biochem. Sci.">
        <title>Tinkering with a viral ribonucleotide reductase.</title>
        <authorList>
            <person name="Lembo D."/>
            <person name="Brune W."/>
        </authorList>
    </citation>
    <scope>REVIEW</scope>
</reference>
<sequence length="789" mass="88047">MALDFLSTDCPLGIVSDIISNVNTIKEYGYSSELSTTLAPRPSREQVLEYITRVVDKLKPLCRVDERLYIACGELVHLRIKARNTDLKYWLKSSEIDLSDVVEQAILEHIDFVQKTLNSFETSEYRDLCSLGLQSALKYEEMYLAKMRGGRLESMGQFFLRLATTATHYTMEQPAMARVLVSGEVGWTYIFRAFFTALAGQVVIPATPIMLFGGRDCGSMASCYLLNPRVTDMNSAIPALMEEVGPILCNRGGIGLSLQRFNTPPTEGCSRGVMALLKLLDSMTMAINSDGERPTGVCVYFEPWHADIRAILNMRGMLARDETVRCDNIFACMWTPDLFFDRYQRYVDGESGIMWTLFDDTASHLCHMYGNDFTREYERLERCGFGIDAIPIQDMAFIIVRSAVMTGSPFLMFKDACNRHYHFDMRQRGAIMGSNLCTEIIQHADETQNGVCNLASINLPKCLALPPPNIAGVPYFDFAALGRAAATATIFVNAMMCASTYPTVKSQKGVEENRSLGLGIQGLHTTFLMLDLDMASPEAHQLNKQIAERLLLNSMKASATLCKLGMQPFKGFEDSKYSRGELPFDAYPNVTLTNRNAWRRLRTDIKQYGLYNSQFVAYMPTVSSSQVTESSEGFSPVYTNLFSKVTATGEVLRPNVLLMRTIRSIFPQECARLQALSTLEAAKWSVVGAFGDLPVGHPLSKFKTAFEYDQTMLINMCADRAAFVDQSQSMSLFITEPADGKLPASRIMNLLVHAYKRGLKTGMYYCKIKKATNNGVFVGGDLVCTSCSL</sequence>
<feature type="chain" id="PRO_0000187242" description="Ribonucleoside-diphosphate reductase large subunit">
    <location>
        <begin position="1"/>
        <end position="789"/>
    </location>
</feature>
<feature type="active site" description="Proton acceptor" evidence="1">
    <location>
        <position position="435"/>
    </location>
</feature>
<feature type="active site" description="Cysteine radical intermediate" evidence="1">
    <location>
        <position position="437"/>
    </location>
</feature>
<feature type="active site" description="Proton acceptor" evidence="1">
    <location>
        <position position="439"/>
    </location>
</feature>
<feature type="binding site" evidence="1">
    <location>
        <position position="207"/>
    </location>
    <ligand>
        <name>substrate</name>
    </ligand>
</feature>
<feature type="binding site" evidence="1">
    <location>
        <begin position="222"/>
        <end position="223"/>
    </location>
    <ligand>
        <name>substrate</name>
    </ligand>
</feature>
<feature type="binding site" evidence="1">
    <location>
        <position position="253"/>
    </location>
    <ligand>
        <name>substrate</name>
    </ligand>
</feature>
<feature type="binding site" evidence="1">
    <location>
        <begin position="435"/>
        <end position="439"/>
    </location>
    <ligand>
        <name>substrate</name>
    </ligand>
</feature>
<feature type="binding site" evidence="1">
    <location>
        <begin position="620"/>
        <end position="624"/>
    </location>
    <ligand>
        <name>substrate</name>
    </ligand>
</feature>
<feature type="site" description="Important for hydrogen atom transfer" evidence="1">
    <location>
        <position position="223"/>
    </location>
</feature>
<feature type="site" description="Important for hydrogen atom transfer" evidence="1">
    <location>
        <position position="452"/>
    </location>
</feature>
<feature type="site" description="Important for electron transfer" evidence="1">
    <location>
        <position position="764"/>
    </location>
</feature>
<feature type="site" description="Important for electron transfer" evidence="1">
    <location>
        <position position="765"/>
    </location>
</feature>
<feature type="site" description="Interacts with thioredoxin/glutaredoxin" evidence="1">
    <location>
        <position position="784"/>
    </location>
</feature>
<feature type="site" description="Interacts with thioredoxin/glutaredoxin" evidence="1">
    <location>
        <position position="787"/>
    </location>
</feature>
<feature type="disulfide bond" description="Redox-active" evidence="1">
    <location>
        <begin position="223"/>
        <end position="452"/>
    </location>
</feature>
<organismHost>
    <name type="scientific">Equus caballus</name>
    <name type="common">Horse</name>
    <dbReference type="NCBI Taxonomy" id="9796"/>
</organismHost>
<gene>
    <name evidence="1" type="primary">RIR1</name>
</gene>
<keyword id="KW-0067">ATP-binding</keyword>
<keyword id="KW-1015">Disulfide bond</keyword>
<keyword id="KW-0235">DNA replication</keyword>
<keyword id="KW-0244">Early protein</keyword>
<keyword id="KW-0547">Nucleotide-binding</keyword>
<keyword id="KW-0560">Oxidoreductase</keyword>
<keyword id="KW-1251">Viral latency</keyword>
<keyword id="KW-1272">Viral reactivation from latency</keyword>
<evidence type="ECO:0000255" key="1">
    <source>
        <dbReference type="HAMAP-Rule" id="MF_04026"/>
    </source>
</evidence>
<organism>
    <name type="scientific">Equine herpesvirus 4 (strain 1942)</name>
    <name type="common">EHV-4</name>
    <name type="synonym">Equine rhinopneumonitis virus</name>
    <dbReference type="NCBI Taxonomy" id="10333"/>
    <lineage>
        <taxon>Viruses</taxon>
        <taxon>Duplodnaviria</taxon>
        <taxon>Heunggongvirae</taxon>
        <taxon>Peploviricota</taxon>
        <taxon>Herviviricetes</taxon>
        <taxon>Herpesvirales</taxon>
        <taxon>Orthoherpesviridae</taxon>
        <taxon>Alphaherpesvirinae</taxon>
        <taxon>Varicellovirus</taxon>
        <taxon>Varicellovirus equidalpha4</taxon>
        <taxon>Equid alphaherpesvirus 4</taxon>
    </lineage>
</organism>
<accession>P50642</accession>